<evidence type="ECO:0000255" key="1">
    <source>
        <dbReference type="HAMAP-Rule" id="MF_00268"/>
    </source>
</evidence>
<evidence type="ECO:0000256" key="2">
    <source>
        <dbReference type="SAM" id="MobiDB-lite"/>
    </source>
</evidence>
<organism>
    <name type="scientific">Streptomyces avermitilis (strain ATCC 31267 / DSM 46492 / JCM 5070 / NBRC 14893 / NCIMB 12804 / NRRL 8165 / MA-4680)</name>
    <dbReference type="NCBI Taxonomy" id="227882"/>
    <lineage>
        <taxon>Bacteria</taxon>
        <taxon>Bacillati</taxon>
        <taxon>Actinomycetota</taxon>
        <taxon>Actinomycetes</taxon>
        <taxon>Kitasatosporales</taxon>
        <taxon>Streptomycetaceae</taxon>
        <taxon>Streptomyces</taxon>
    </lineage>
</organism>
<keyword id="KW-0067">ATP-binding</keyword>
<keyword id="KW-0963">Cytoplasm</keyword>
<keyword id="KW-0227">DNA damage</keyword>
<keyword id="KW-0233">DNA recombination</keyword>
<keyword id="KW-0234">DNA repair</keyword>
<keyword id="KW-0238">DNA-binding</keyword>
<keyword id="KW-0547">Nucleotide-binding</keyword>
<keyword id="KW-1185">Reference proteome</keyword>
<keyword id="KW-0742">SOS response</keyword>
<comment type="function">
    <text evidence="1">Can catalyze the hydrolysis of ATP in the presence of single-stranded DNA, the ATP-dependent uptake of single-stranded DNA by duplex DNA, and the ATP-dependent hybridization of homologous single-stranded DNAs. It interacts with LexA causing its activation and leading to its autocatalytic cleavage.</text>
</comment>
<comment type="subcellular location">
    <subcellularLocation>
        <location evidence="1">Cytoplasm</location>
    </subcellularLocation>
</comment>
<comment type="similarity">
    <text evidence="1">Belongs to the RecA family.</text>
</comment>
<dbReference type="EMBL" id="BA000030">
    <property type="protein sequence ID" value="BAC70203.1"/>
    <property type="molecule type" value="Genomic_DNA"/>
</dbReference>
<dbReference type="RefSeq" id="WP_010983929.1">
    <property type="nucleotide sequence ID" value="NZ_JZJK01000086.1"/>
</dbReference>
<dbReference type="SMR" id="Q82KB1"/>
<dbReference type="GeneID" id="41539577"/>
<dbReference type="KEGG" id="sma:SAVERM_2492"/>
<dbReference type="eggNOG" id="COG0468">
    <property type="taxonomic scope" value="Bacteria"/>
</dbReference>
<dbReference type="HOGENOM" id="CLU_040469_3_2_11"/>
<dbReference type="OrthoDB" id="9776733at2"/>
<dbReference type="Proteomes" id="UP000000428">
    <property type="component" value="Chromosome"/>
</dbReference>
<dbReference type="GO" id="GO:0005829">
    <property type="term" value="C:cytosol"/>
    <property type="evidence" value="ECO:0007669"/>
    <property type="project" value="TreeGrafter"/>
</dbReference>
<dbReference type="GO" id="GO:0005524">
    <property type="term" value="F:ATP binding"/>
    <property type="evidence" value="ECO:0007669"/>
    <property type="project" value="UniProtKB-UniRule"/>
</dbReference>
<dbReference type="GO" id="GO:0016887">
    <property type="term" value="F:ATP hydrolysis activity"/>
    <property type="evidence" value="ECO:0007669"/>
    <property type="project" value="InterPro"/>
</dbReference>
<dbReference type="GO" id="GO:0140664">
    <property type="term" value="F:ATP-dependent DNA damage sensor activity"/>
    <property type="evidence" value="ECO:0007669"/>
    <property type="project" value="InterPro"/>
</dbReference>
<dbReference type="GO" id="GO:0003684">
    <property type="term" value="F:damaged DNA binding"/>
    <property type="evidence" value="ECO:0007669"/>
    <property type="project" value="UniProtKB-UniRule"/>
</dbReference>
<dbReference type="GO" id="GO:0003697">
    <property type="term" value="F:single-stranded DNA binding"/>
    <property type="evidence" value="ECO:0007669"/>
    <property type="project" value="UniProtKB-UniRule"/>
</dbReference>
<dbReference type="GO" id="GO:0006310">
    <property type="term" value="P:DNA recombination"/>
    <property type="evidence" value="ECO:0007669"/>
    <property type="project" value="UniProtKB-UniRule"/>
</dbReference>
<dbReference type="GO" id="GO:0006281">
    <property type="term" value="P:DNA repair"/>
    <property type="evidence" value="ECO:0007669"/>
    <property type="project" value="UniProtKB-UniRule"/>
</dbReference>
<dbReference type="GO" id="GO:0009432">
    <property type="term" value="P:SOS response"/>
    <property type="evidence" value="ECO:0007669"/>
    <property type="project" value="UniProtKB-UniRule"/>
</dbReference>
<dbReference type="CDD" id="cd00983">
    <property type="entry name" value="RecA"/>
    <property type="match status" value="1"/>
</dbReference>
<dbReference type="FunFam" id="3.40.50.300:FF:000087">
    <property type="entry name" value="Recombinase RecA"/>
    <property type="match status" value="1"/>
</dbReference>
<dbReference type="Gene3D" id="3.40.50.300">
    <property type="entry name" value="P-loop containing nucleotide triphosphate hydrolases"/>
    <property type="match status" value="1"/>
</dbReference>
<dbReference type="HAMAP" id="MF_00268">
    <property type="entry name" value="RecA"/>
    <property type="match status" value="1"/>
</dbReference>
<dbReference type="InterPro" id="IPR003593">
    <property type="entry name" value="AAA+_ATPase"/>
</dbReference>
<dbReference type="InterPro" id="IPR013765">
    <property type="entry name" value="DNA_recomb/repair_RecA"/>
</dbReference>
<dbReference type="InterPro" id="IPR020584">
    <property type="entry name" value="DNA_recomb/repair_RecA_CS"/>
</dbReference>
<dbReference type="InterPro" id="IPR027417">
    <property type="entry name" value="P-loop_NTPase"/>
</dbReference>
<dbReference type="InterPro" id="IPR049261">
    <property type="entry name" value="RecA-like_C"/>
</dbReference>
<dbReference type="InterPro" id="IPR049428">
    <property type="entry name" value="RecA-like_N"/>
</dbReference>
<dbReference type="InterPro" id="IPR020588">
    <property type="entry name" value="RecA_ATP-bd"/>
</dbReference>
<dbReference type="InterPro" id="IPR023400">
    <property type="entry name" value="RecA_C_sf"/>
</dbReference>
<dbReference type="InterPro" id="IPR020587">
    <property type="entry name" value="RecA_monomer-monomer_interface"/>
</dbReference>
<dbReference type="NCBIfam" id="TIGR02012">
    <property type="entry name" value="tigrfam_recA"/>
    <property type="match status" value="1"/>
</dbReference>
<dbReference type="PANTHER" id="PTHR45900:SF1">
    <property type="entry name" value="MITOCHONDRIAL DNA REPAIR PROTEIN RECA HOMOLOG-RELATED"/>
    <property type="match status" value="1"/>
</dbReference>
<dbReference type="PANTHER" id="PTHR45900">
    <property type="entry name" value="RECA"/>
    <property type="match status" value="1"/>
</dbReference>
<dbReference type="Pfam" id="PF00154">
    <property type="entry name" value="RecA"/>
    <property type="match status" value="1"/>
</dbReference>
<dbReference type="Pfam" id="PF21096">
    <property type="entry name" value="RecA_C"/>
    <property type="match status" value="1"/>
</dbReference>
<dbReference type="PRINTS" id="PR00142">
    <property type="entry name" value="RECA"/>
</dbReference>
<dbReference type="SMART" id="SM00382">
    <property type="entry name" value="AAA"/>
    <property type="match status" value="1"/>
</dbReference>
<dbReference type="SUPFAM" id="SSF52540">
    <property type="entry name" value="P-loop containing nucleoside triphosphate hydrolases"/>
    <property type="match status" value="1"/>
</dbReference>
<dbReference type="SUPFAM" id="SSF54752">
    <property type="entry name" value="RecA protein, C-terminal domain"/>
    <property type="match status" value="1"/>
</dbReference>
<dbReference type="PROSITE" id="PS00321">
    <property type="entry name" value="RECA_1"/>
    <property type="match status" value="1"/>
</dbReference>
<dbReference type="PROSITE" id="PS50162">
    <property type="entry name" value="RECA_2"/>
    <property type="match status" value="1"/>
</dbReference>
<dbReference type="PROSITE" id="PS50163">
    <property type="entry name" value="RECA_3"/>
    <property type="match status" value="1"/>
</dbReference>
<proteinExistence type="inferred from homology"/>
<feature type="chain" id="PRO_0000122852" description="Protein RecA">
    <location>
        <begin position="1"/>
        <end position="377"/>
    </location>
</feature>
<feature type="region of interest" description="Disordered" evidence="2">
    <location>
        <begin position="329"/>
        <end position="377"/>
    </location>
</feature>
<feature type="compositionally biased region" description="Low complexity" evidence="2">
    <location>
        <begin position="342"/>
        <end position="377"/>
    </location>
</feature>
<feature type="binding site" evidence="1">
    <location>
        <begin position="66"/>
        <end position="73"/>
    </location>
    <ligand>
        <name>ATP</name>
        <dbReference type="ChEBI" id="CHEBI:30616"/>
    </ligand>
</feature>
<protein>
    <recommendedName>
        <fullName evidence="1">Protein RecA</fullName>
    </recommendedName>
    <alternativeName>
        <fullName evidence="1">Recombinase A</fullName>
    </alternativeName>
</protein>
<accession>Q82KB1</accession>
<name>RECA_STRAW</name>
<gene>
    <name evidence="1" type="primary">recA</name>
    <name type="ordered locus">SAV_2492</name>
</gene>
<reference key="1">
    <citation type="journal article" date="2001" name="Proc. Natl. Acad. Sci. U.S.A.">
        <title>Genome sequence of an industrial microorganism Streptomyces avermitilis: deducing the ability of producing secondary metabolites.</title>
        <authorList>
            <person name="Omura S."/>
            <person name="Ikeda H."/>
            <person name="Ishikawa J."/>
            <person name="Hanamoto A."/>
            <person name="Takahashi C."/>
            <person name="Shinose M."/>
            <person name="Takahashi Y."/>
            <person name="Horikawa H."/>
            <person name="Nakazawa H."/>
            <person name="Osonoe T."/>
            <person name="Kikuchi H."/>
            <person name="Shiba T."/>
            <person name="Sakaki Y."/>
            <person name="Hattori M."/>
        </authorList>
    </citation>
    <scope>NUCLEOTIDE SEQUENCE [LARGE SCALE GENOMIC DNA]</scope>
    <source>
        <strain>ATCC 31267 / DSM 46492 / JCM 5070 / NBRC 14893 / NCIMB 12804 / NRRL 8165 / MA-4680</strain>
    </source>
</reference>
<reference key="2">
    <citation type="journal article" date="2003" name="Nat. Biotechnol.">
        <title>Complete genome sequence and comparative analysis of the industrial microorganism Streptomyces avermitilis.</title>
        <authorList>
            <person name="Ikeda H."/>
            <person name="Ishikawa J."/>
            <person name="Hanamoto A."/>
            <person name="Shinose M."/>
            <person name="Kikuchi H."/>
            <person name="Shiba T."/>
            <person name="Sakaki Y."/>
            <person name="Hattori M."/>
            <person name="Omura S."/>
        </authorList>
    </citation>
    <scope>NUCLEOTIDE SEQUENCE [LARGE SCALE GENOMIC DNA]</scope>
    <source>
        <strain>ATCC 31267 / DSM 46492 / JCM 5070 / NBRC 14893 / NCIMB 12804 / NRRL 8165 / MA-4680</strain>
    </source>
</reference>
<sequence>MAGTDREKALDAALAQIERQFGKGAVMRLGERPNEPIEVIPTGSTALDVALGVGGLPRGRVVEVYGPESSGKTTLTLHAVANAQKAGGQVAFVDAEHALDPEYAKKLGVDIDNLILSQPDNGEQALEIVDMLVRSGALDLIVIDSVAALVPRAEIEGEMGDSHVGLQARLMSQALRKITSALNQSKTTAIFINQLREKIGVMFGSPETTTGGRALKFYASVRLDIRRIETLKDGTDAVGNRTRVKVVKNKVAPPFKQAEFDILYGQGISREGGLIDMGVENGFVRKAGAWYTYEGDQLGQGKENARNFLKDNPDLANEIEKKIKEKLGVGVRPEEPTAEPGADAAVTSAAAATDDTAKTVSAPAAKTTKSKAAAAKS</sequence>